<name>TSHR_CANLF</name>
<protein>
    <recommendedName>
        <fullName>Thyrotropin receptor</fullName>
    </recommendedName>
    <alternativeName>
        <fullName>Thyroid-stimulating hormone receptor</fullName>
        <shortName>TSH-R</shortName>
    </alternativeName>
</protein>
<gene>
    <name type="primary">TSHR</name>
</gene>
<evidence type="ECO:0000250" key="1">
    <source>
        <dbReference type="UniProtKB" id="P16473"/>
    </source>
</evidence>
<evidence type="ECO:0000250" key="2">
    <source>
        <dbReference type="UniProtKB" id="P21463"/>
    </source>
</evidence>
<evidence type="ECO:0000255" key="3"/>
<evidence type="ECO:0000255" key="4">
    <source>
        <dbReference type="PROSITE-ProRule" id="PRU00521"/>
    </source>
</evidence>
<evidence type="ECO:0000305" key="5"/>
<dbReference type="EMBL" id="X17146">
    <property type="protein sequence ID" value="CAA35026.1"/>
    <property type="molecule type" value="mRNA"/>
</dbReference>
<dbReference type="EMBL" id="X17147">
    <property type="protein sequence ID" value="CAA35027.1"/>
    <property type="molecule type" value="mRNA"/>
</dbReference>
<dbReference type="EMBL" id="M29957">
    <property type="protein sequence ID" value="AAA30901.1"/>
    <property type="molecule type" value="mRNA"/>
</dbReference>
<dbReference type="EMBL" id="M90047">
    <property type="protein sequence ID" value="AAA30902.1"/>
    <property type="molecule type" value="mRNA"/>
</dbReference>
<dbReference type="PIR" id="A40077">
    <property type="entry name" value="A40077"/>
</dbReference>
<dbReference type="RefSeq" id="NP_001003285.1">
    <molecule id="P14763-1"/>
    <property type="nucleotide sequence ID" value="NM_001003285.1"/>
</dbReference>
<dbReference type="SMR" id="P14763"/>
<dbReference type="FunCoup" id="P14763">
    <property type="interactions" value="58"/>
</dbReference>
<dbReference type="STRING" id="9615.ENSCAFP00000025490"/>
<dbReference type="GlyCosmos" id="P14763">
    <property type="glycosylation" value="5 sites, No reported glycans"/>
</dbReference>
<dbReference type="PaxDb" id="9612-ENSCAFP00000025490"/>
<dbReference type="Ensembl" id="ENSCAFT00030007006.1">
    <molecule id="P14763-1"/>
    <property type="protein sequence ID" value="ENSCAFP00030006153.1"/>
    <property type="gene ID" value="ENSCAFG00030003718.1"/>
</dbReference>
<dbReference type="Ensembl" id="ENSCAFT00030007029.1">
    <molecule id="P14763-2"/>
    <property type="protein sequence ID" value="ENSCAFP00030006164.1"/>
    <property type="gene ID" value="ENSCAFG00030003718.1"/>
</dbReference>
<dbReference type="GeneID" id="403968"/>
<dbReference type="KEGG" id="cfa:403968"/>
<dbReference type="CTD" id="7253"/>
<dbReference type="eggNOG" id="KOG2087">
    <property type="taxonomic scope" value="Eukaryota"/>
</dbReference>
<dbReference type="InParanoid" id="P14763"/>
<dbReference type="OrthoDB" id="5981530at2759"/>
<dbReference type="Reactome" id="R-CFA-375281">
    <property type="pathway name" value="Hormone ligand-binding receptors"/>
</dbReference>
<dbReference type="Proteomes" id="UP000002254">
    <property type="component" value="Unplaced"/>
</dbReference>
<dbReference type="Proteomes" id="UP000694429">
    <property type="component" value="Chromosome 8"/>
</dbReference>
<dbReference type="Proteomes" id="UP000694542">
    <property type="component" value="Unplaced"/>
</dbReference>
<dbReference type="Proteomes" id="UP000805418">
    <property type="component" value="Unplaced"/>
</dbReference>
<dbReference type="GO" id="GO:0016323">
    <property type="term" value="C:basolateral plasma membrane"/>
    <property type="evidence" value="ECO:0000250"/>
    <property type="project" value="UniProtKB"/>
</dbReference>
<dbReference type="GO" id="GO:0005886">
    <property type="term" value="C:plasma membrane"/>
    <property type="evidence" value="ECO:0000250"/>
    <property type="project" value="UniProtKB"/>
</dbReference>
<dbReference type="GO" id="GO:0008528">
    <property type="term" value="F:G protein-coupled peptide receptor activity"/>
    <property type="evidence" value="ECO:0000318"/>
    <property type="project" value="GO_Central"/>
</dbReference>
<dbReference type="GO" id="GO:0044877">
    <property type="term" value="F:protein-containing complex binding"/>
    <property type="evidence" value="ECO:0000250"/>
    <property type="project" value="UniProtKB"/>
</dbReference>
<dbReference type="GO" id="GO:0038023">
    <property type="term" value="F:signaling receptor activity"/>
    <property type="evidence" value="ECO:0000250"/>
    <property type="project" value="UniProtKB"/>
</dbReference>
<dbReference type="GO" id="GO:0004996">
    <property type="term" value="F:thyroid-stimulating hormone receptor activity"/>
    <property type="evidence" value="ECO:0000250"/>
    <property type="project" value="UniProtKB"/>
</dbReference>
<dbReference type="GO" id="GO:0007189">
    <property type="term" value="P:adenylate cyclase-activating G protein-coupled receptor signaling pathway"/>
    <property type="evidence" value="ECO:0000250"/>
    <property type="project" value="UniProtKB"/>
</dbReference>
<dbReference type="GO" id="GO:0007166">
    <property type="term" value="P:cell surface receptor signaling pathway"/>
    <property type="evidence" value="ECO:0000250"/>
    <property type="project" value="UniProtKB"/>
</dbReference>
<dbReference type="GO" id="GO:1904588">
    <property type="term" value="P:cellular response to glycoprotein"/>
    <property type="evidence" value="ECO:0000250"/>
    <property type="project" value="UniProtKB"/>
</dbReference>
<dbReference type="GO" id="GO:1905229">
    <property type="term" value="P:cellular response to thyrotropin-releasing hormone"/>
    <property type="evidence" value="ECO:0000250"/>
    <property type="project" value="UniProtKB"/>
</dbReference>
<dbReference type="GO" id="GO:0009755">
    <property type="term" value="P:hormone-mediated signaling pathway"/>
    <property type="evidence" value="ECO:0000318"/>
    <property type="project" value="GO_Central"/>
</dbReference>
<dbReference type="GO" id="GO:0038194">
    <property type="term" value="P:thyroid-stimulating hormone signaling pathway"/>
    <property type="evidence" value="ECO:0000250"/>
    <property type="project" value="UniProtKB"/>
</dbReference>
<dbReference type="CDD" id="cd15964">
    <property type="entry name" value="7tmA_TSH-R"/>
    <property type="match status" value="1"/>
</dbReference>
<dbReference type="FunFam" id="1.20.1070.10:FF:000019">
    <property type="entry name" value="Lutropin-choriogonadotropic hormone receptor"/>
    <property type="match status" value="1"/>
</dbReference>
<dbReference type="FunFam" id="3.80.10.10:FF:000176">
    <property type="entry name" value="Thyrotropin receptor"/>
    <property type="match status" value="1"/>
</dbReference>
<dbReference type="Gene3D" id="1.20.1070.10">
    <property type="entry name" value="Rhodopsin 7-helix transmembrane proteins"/>
    <property type="match status" value="1"/>
</dbReference>
<dbReference type="Gene3D" id="3.80.10.10">
    <property type="entry name" value="Ribonuclease Inhibitor"/>
    <property type="match status" value="1"/>
</dbReference>
<dbReference type="InterPro" id="IPR000276">
    <property type="entry name" value="GPCR_Rhodpsn"/>
</dbReference>
<dbReference type="InterPro" id="IPR017452">
    <property type="entry name" value="GPCR_Rhodpsn_7TM"/>
</dbReference>
<dbReference type="InterPro" id="IPR002131">
    <property type="entry name" value="Gphrmn_rcpt_fam"/>
</dbReference>
<dbReference type="InterPro" id="IPR026906">
    <property type="entry name" value="LRR_5"/>
</dbReference>
<dbReference type="InterPro" id="IPR032675">
    <property type="entry name" value="LRR_dom_sf"/>
</dbReference>
<dbReference type="InterPro" id="IPR002274">
    <property type="entry name" value="TSH_rcpt"/>
</dbReference>
<dbReference type="PANTHER" id="PTHR24372">
    <property type="entry name" value="GLYCOPROTEIN HORMONE RECEPTOR"/>
    <property type="match status" value="1"/>
</dbReference>
<dbReference type="PANTHER" id="PTHR24372:SF0">
    <property type="entry name" value="THYROTROPIN RECEPTOR"/>
    <property type="match status" value="1"/>
</dbReference>
<dbReference type="Pfam" id="PF00001">
    <property type="entry name" value="7tm_1"/>
    <property type="match status" value="1"/>
</dbReference>
<dbReference type="Pfam" id="PF13306">
    <property type="entry name" value="LRR_5"/>
    <property type="match status" value="2"/>
</dbReference>
<dbReference type="PRINTS" id="PR00373">
    <property type="entry name" value="GLYCHORMONER"/>
</dbReference>
<dbReference type="PRINTS" id="PR00237">
    <property type="entry name" value="GPCRRHODOPSN"/>
</dbReference>
<dbReference type="PRINTS" id="PR01145">
    <property type="entry name" value="TSHRECEPTOR"/>
</dbReference>
<dbReference type="SUPFAM" id="SSF81321">
    <property type="entry name" value="Family A G protein-coupled receptor-like"/>
    <property type="match status" value="1"/>
</dbReference>
<dbReference type="SUPFAM" id="SSF52058">
    <property type="entry name" value="L domain-like"/>
    <property type="match status" value="1"/>
</dbReference>
<dbReference type="PROSITE" id="PS00237">
    <property type="entry name" value="G_PROTEIN_RECEP_F1_1"/>
    <property type="match status" value="1"/>
</dbReference>
<dbReference type="PROSITE" id="PS50262">
    <property type="entry name" value="G_PROTEIN_RECEP_F1_2"/>
    <property type="match status" value="1"/>
</dbReference>
<feature type="signal peptide">
    <location>
        <begin position="1"/>
        <end position="20"/>
    </location>
</feature>
<feature type="chain" id="PRO_0000012785" description="Thyrotropin receptor">
    <location>
        <begin position="21"/>
        <end position="764"/>
    </location>
</feature>
<feature type="topological domain" description="Extracellular" evidence="3">
    <location>
        <begin position="21"/>
        <end position="413"/>
    </location>
</feature>
<feature type="transmembrane region" description="Helical; Name=1" evidence="3">
    <location>
        <begin position="414"/>
        <end position="441"/>
    </location>
</feature>
<feature type="topological domain" description="Cytoplasmic" evidence="3">
    <location>
        <begin position="442"/>
        <end position="450"/>
    </location>
</feature>
<feature type="transmembrane region" description="Helical; Name=2" evidence="3">
    <location>
        <begin position="451"/>
        <end position="473"/>
    </location>
</feature>
<feature type="topological domain" description="Extracellular" evidence="3">
    <location>
        <begin position="474"/>
        <end position="494"/>
    </location>
</feature>
<feature type="transmembrane region" description="Helical; Name=3" evidence="3">
    <location>
        <begin position="495"/>
        <end position="517"/>
    </location>
</feature>
<feature type="topological domain" description="Cytoplasmic" evidence="3">
    <location>
        <begin position="518"/>
        <end position="537"/>
    </location>
</feature>
<feature type="transmembrane region" description="Helical; Name=4" evidence="3">
    <location>
        <begin position="538"/>
        <end position="560"/>
    </location>
</feature>
<feature type="topological domain" description="Extracellular" evidence="3">
    <location>
        <begin position="561"/>
        <end position="580"/>
    </location>
</feature>
<feature type="transmembrane region" description="Helical; Name=5" evidence="3">
    <location>
        <begin position="581"/>
        <end position="602"/>
    </location>
</feature>
<feature type="topological domain" description="Cytoplasmic" evidence="3">
    <location>
        <begin position="603"/>
        <end position="625"/>
    </location>
</feature>
<feature type="transmembrane region" description="Helical; Name=6" evidence="3">
    <location>
        <begin position="626"/>
        <end position="649"/>
    </location>
</feature>
<feature type="topological domain" description="Extracellular" evidence="3">
    <location>
        <begin position="650"/>
        <end position="660"/>
    </location>
</feature>
<feature type="transmembrane region" description="Helical; Name=7" evidence="3">
    <location>
        <begin position="661"/>
        <end position="682"/>
    </location>
</feature>
<feature type="topological domain" description="Cytoplasmic" evidence="3">
    <location>
        <begin position="683"/>
        <end position="764"/>
    </location>
</feature>
<feature type="repeat" description="LRR 1">
    <location>
        <begin position="125"/>
        <end position="149"/>
    </location>
</feature>
<feature type="repeat" description="LRR 2">
    <location>
        <begin position="150"/>
        <end position="174"/>
    </location>
</feature>
<feature type="repeat" description="LRR 3">
    <location>
        <begin position="176"/>
        <end position="199"/>
    </location>
</feature>
<feature type="repeat" description="LRR 4">
    <location>
        <begin position="201"/>
        <end position="223"/>
    </location>
</feature>
<feature type="repeat" description="LRR 5">
    <location>
        <begin position="225"/>
        <end position="248"/>
    </location>
</feature>
<feature type="repeat" description="LRR 6">
    <location>
        <begin position="250"/>
        <end position="271"/>
    </location>
</feature>
<feature type="short sequence motif" description="PDZ-binding">
    <location>
        <begin position="762"/>
        <end position="764"/>
    </location>
</feature>
<feature type="modified residue" description="Sulfotyrosine" evidence="1">
    <location>
        <position position="385"/>
    </location>
</feature>
<feature type="glycosylation site" description="N-linked (GlcNAc...) asparagine" evidence="3">
    <location>
        <position position="77"/>
    </location>
</feature>
<feature type="glycosylation site" description="N-linked (GlcNAc...) asparagine" evidence="3">
    <location>
        <position position="99"/>
    </location>
</feature>
<feature type="glycosylation site" description="N-linked (GlcNAc...) asparagine" evidence="3">
    <location>
        <position position="177"/>
    </location>
</feature>
<feature type="glycosylation site" description="N-linked (GlcNAc...) asparagine" evidence="3">
    <location>
        <position position="198"/>
    </location>
</feature>
<feature type="glycosylation site" description="N-linked (GlcNAc...) asparagine" evidence="3">
    <location>
        <position position="302"/>
    </location>
</feature>
<feature type="disulfide bond" evidence="4">
    <location>
        <begin position="31"/>
        <end position="41"/>
    </location>
</feature>
<feature type="disulfide bond" evidence="4">
    <location>
        <begin position="494"/>
        <end position="569"/>
    </location>
</feature>
<feature type="splice variant" id="VSP_001980" description="In isoform Short." evidence="5">
    <location>
        <begin position="81"/>
        <end position="105"/>
    </location>
</feature>
<sequence>MRPPPLLHLALLLALPRSLGGKGCPSPPCECHQEDDFRVTCKDIHRIPTLPPSTQTLKFIETQLKTIPSRAFSNLPNISRIYLSIDATLQRLESHSFYNLSKMTHIEIRNTRSLTSIDPDALKELPLLKFLGIFNTGLGVFPDVTKVYSTDVFFILEITDNPYMASIPANAFQGLCNETLTLKLYNNGFTSIQGHAFNGTKLDAVYLNKNKYLSAIDKDAFGGVYSGPTLLDVSYTSVTALPSKGLEHLKELIARNTWTLKKLPLSLSFLHLTRADLSYPSHCCAFKNQKKIRGILESLMCNESSIRSLRQRKSVNTLNGPFDQEYEEYLGDSHAGYKDNSQFQDTDSNSHYYVFFEEQEDEILGFGQELKNPQEETLQAFDSHYDYTVCGGNEDMVCTPKSDEFNPCEDIMGYKFLRIVVWFVSLLALLGNVFVLIVLLTSHYKLTVPRFLMCNLAFADFCMGMYLLLIASVDLYTHSEYYNHAIDWQTGPGCNTAGFFTVFASELSVYTLTVITLERWYAITFAMRLDRKIRLRHAYAIMVGGWVCCFLLALLPLVGISSYAKVSICLPMDTETPLALAYIILVLLLNIVAFIIVCSCYVKIYITVRNPQYNPGDKDTKIAKRMAVLIFTDFMCMAPISFYALSALMNKPLITVTNSKILLVLFYPLNSCANPFLYAIFTKAFQRDVFILLSKFGICKRQAQAYRGQRVSPKNSAGIQIQKVTRDMRQSLPNMQDEYELLENSHLTPNKQGQISKEYNQTVL</sequence>
<organism>
    <name type="scientific">Canis lupus familiaris</name>
    <name type="common">Dog</name>
    <name type="synonym">Canis familiaris</name>
    <dbReference type="NCBI Taxonomy" id="9615"/>
    <lineage>
        <taxon>Eukaryota</taxon>
        <taxon>Metazoa</taxon>
        <taxon>Chordata</taxon>
        <taxon>Craniata</taxon>
        <taxon>Vertebrata</taxon>
        <taxon>Euteleostomi</taxon>
        <taxon>Mammalia</taxon>
        <taxon>Eutheria</taxon>
        <taxon>Laurasiatheria</taxon>
        <taxon>Carnivora</taxon>
        <taxon>Caniformia</taxon>
        <taxon>Canidae</taxon>
        <taxon>Canis</taxon>
    </lineage>
</organism>
<reference key="1">
    <citation type="journal article" date="1989" name="Nucleic Acids Res.">
        <title>Nucleotide sequence of the dog thyrotropin receptor cDNA.</title>
        <authorList>
            <person name="Parmentier M."/>
            <person name="Libert F."/>
            <person name="Maenhaut C."/>
            <person name="Lefort A."/>
            <person name="Gerard C."/>
            <person name="Perret J."/>
            <person name="van Sande J."/>
            <person name="Dumont J.E."/>
            <person name="Vassart G."/>
        </authorList>
    </citation>
    <scope>NUCLEOTIDE SEQUENCE [MRNA]</scope>
    <source>
        <tissue>Thyroid</tissue>
    </source>
</reference>
<reference key="2">
    <citation type="journal article" date="1989" name="Science">
        <title>Molecular cloning of the thyrotropin receptor.</title>
        <authorList>
            <person name="Parmentier M."/>
            <person name="Libert F."/>
            <person name="Maenhaut C."/>
            <person name="Lefort A."/>
            <person name="Gerard C."/>
            <person name="Perret J."/>
            <person name="van Sande J."/>
            <person name="Dumont J.E."/>
            <person name="Vassart G."/>
        </authorList>
    </citation>
    <scope>NUCLEOTIDE SEQUENCE [MRNA]</scope>
    <source>
        <tissue>Thyroid</tissue>
    </source>
</reference>
<keyword id="KW-0025">Alternative splicing</keyword>
<keyword id="KW-1003">Cell membrane</keyword>
<keyword id="KW-1015">Disulfide bond</keyword>
<keyword id="KW-0297">G-protein coupled receptor</keyword>
<keyword id="KW-0325">Glycoprotein</keyword>
<keyword id="KW-0433">Leucine-rich repeat</keyword>
<keyword id="KW-0472">Membrane</keyword>
<keyword id="KW-0675">Receptor</keyword>
<keyword id="KW-1185">Reference proteome</keyword>
<keyword id="KW-0677">Repeat</keyword>
<keyword id="KW-0732">Signal</keyword>
<keyword id="KW-0765">Sulfation</keyword>
<keyword id="KW-0807">Transducer</keyword>
<keyword id="KW-0812">Transmembrane</keyword>
<keyword id="KW-1133">Transmembrane helix</keyword>
<proteinExistence type="evidence at transcript level"/>
<accession>P14763</accession>
<comment type="function">
    <text evidence="1 2">Receptor for the thyroid-stimulating hormone (TSH) or thyrotropin. Also acts as a receptor for the heterodimeric glycoprotein hormone (GPHA2:GPHB5) or thyrostimulin. The activity of this receptor is mediated by G proteins which activate adenylate cyclase. Plays a central role in controlling thyroid cell metabolism.</text>
</comment>
<comment type="subunit">
    <text evidence="1">Interacts with heterodimer GPHA2:GPHB5; this interaction stimulates cAMP production. Interacts (via the PDZ-binding motif) with SCRIB; regulates TSHR trafficking and function.</text>
</comment>
<comment type="subcellular location">
    <subcellularLocation>
        <location evidence="1">Cell membrane</location>
        <topology evidence="1">Multi-pass membrane protein</topology>
    </subcellularLocation>
    <subcellularLocation>
        <location evidence="1">Basolateral cell membrane</location>
        <topology evidence="1">Multi-pass membrane protein</topology>
    </subcellularLocation>
</comment>
<comment type="alternative products">
    <event type="alternative splicing"/>
    <isoform>
        <id>P14763-1</id>
        <name>Long</name>
        <sequence type="displayed"/>
    </isoform>
    <isoform>
        <id>P14763-2</id>
        <name>Short</name>
        <sequence type="described" ref="VSP_001980"/>
    </isoform>
</comment>
<comment type="PTM">
    <text evidence="1">Glycosylated.</text>
</comment>
<comment type="PTM">
    <text evidence="1">Sulfated. Sulfation on Tyr-385 plays a role in thyrotropin receptor binding and activation.</text>
</comment>
<comment type="similarity">
    <text evidence="4">Belongs to the G-protein coupled receptor 1 family. FSH/LSH/TSH subfamily.</text>
</comment>